<dbReference type="EMBL" id="AP009247">
    <property type="protein sequence ID" value="BAF61993.1"/>
    <property type="molecule type" value="Genomic_DNA"/>
</dbReference>
<dbReference type="RefSeq" id="WP_011930262.1">
    <property type="nucleotide sequence ID" value="NC_009465.1"/>
</dbReference>
<dbReference type="SMR" id="A5CVN3"/>
<dbReference type="STRING" id="412965.COSY_0888"/>
<dbReference type="KEGG" id="vok:COSY_0888"/>
<dbReference type="eggNOG" id="COG0267">
    <property type="taxonomic scope" value="Bacteria"/>
</dbReference>
<dbReference type="HOGENOM" id="CLU_190949_1_1_6"/>
<dbReference type="OrthoDB" id="21586at2"/>
<dbReference type="Proteomes" id="UP000000247">
    <property type="component" value="Chromosome"/>
</dbReference>
<dbReference type="GO" id="GO:0022625">
    <property type="term" value="C:cytosolic large ribosomal subunit"/>
    <property type="evidence" value="ECO:0007669"/>
    <property type="project" value="TreeGrafter"/>
</dbReference>
<dbReference type="GO" id="GO:0003735">
    <property type="term" value="F:structural constituent of ribosome"/>
    <property type="evidence" value="ECO:0007669"/>
    <property type="project" value="InterPro"/>
</dbReference>
<dbReference type="GO" id="GO:0006412">
    <property type="term" value="P:translation"/>
    <property type="evidence" value="ECO:0007669"/>
    <property type="project" value="UniProtKB-UniRule"/>
</dbReference>
<dbReference type="Gene3D" id="2.20.28.120">
    <property type="entry name" value="Ribosomal protein L33"/>
    <property type="match status" value="1"/>
</dbReference>
<dbReference type="HAMAP" id="MF_00294">
    <property type="entry name" value="Ribosomal_bL33"/>
    <property type="match status" value="1"/>
</dbReference>
<dbReference type="InterPro" id="IPR001705">
    <property type="entry name" value="Ribosomal_bL33"/>
</dbReference>
<dbReference type="InterPro" id="IPR038584">
    <property type="entry name" value="Ribosomal_bL33_sf"/>
</dbReference>
<dbReference type="InterPro" id="IPR011332">
    <property type="entry name" value="Ribosomal_zn-bd"/>
</dbReference>
<dbReference type="NCBIfam" id="NF001860">
    <property type="entry name" value="PRK00595.1"/>
    <property type="match status" value="1"/>
</dbReference>
<dbReference type="NCBIfam" id="TIGR01023">
    <property type="entry name" value="rpmG_bact"/>
    <property type="match status" value="1"/>
</dbReference>
<dbReference type="PANTHER" id="PTHR15238">
    <property type="entry name" value="54S RIBOSOMAL PROTEIN L39, MITOCHONDRIAL"/>
    <property type="match status" value="1"/>
</dbReference>
<dbReference type="PANTHER" id="PTHR15238:SF1">
    <property type="entry name" value="LARGE RIBOSOMAL SUBUNIT PROTEIN BL33M"/>
    <property type="match status" value="1"/>
</dbReference>
<dbReference type="Pfam" id="PF00471">
    <property type="entry name" value="Ribosomal_L33"/>
    <property type="match status" value="1"/>
</dbReference>
<dbReference type="SUPFAM" id="SSF57829">
    <property type="entry name" value="Zn-binding ribosomal proteins"/>
    <property type="match status" value="1"/>
</dbReference>
<proteinExistence type="inferred from homology"/>
<evidence type="ECO:0000255" key="1">
    <source>
        <dbReference type="HAMAP-Rule" id="MF_00294"/>
    </source>
</evidence>
<evidence type="ECO:0000305" key="2"/>
<keyword id="KW-1185">Reference proteome</keyword>
<keyword id="KW-0687">Ribonucleoprotein</keyword>
<keyword id="KW-0689">Ribosomal protein</keyword>
<reference key="1">
    <citation type="journal article" date="2007" name="Curr. Biol.">
        <title>Reduced genome of the thioautotrophic intracellular symbiont in a deep-sea clam, Calyptogena okutanii.</title>
        <authorList>
            <person name="Kuwahara H."/>
            <person name="Yoshida T."/>
            <person name="Takaki Y."/>
            <person name="Shimamura S."/>
            <person name="Nishi S."/>
            <person name="Harada M."/>
            <person name="Matsuyama K."/>
            <person name="Takishita K."/>
            <person name="Kawato M."/>
            <person name="Uematsu K."/>
            <person name="Fujiwara Y."/>
            <person name="Sato T."/>
            <person name="Kato C."/>
            <person name="Kitagawa M."/>
            <person name="Kato I."/>
            <person name="Maruyama T."/>
        </authorList>
    </citation>
    <scope>NUCLEOTIDE SEQUENCE [LARGE SCALE GENOMIC DNA]</scope>
    <source>
        <strain>HA</strain>
    </source>
</reference>
<name>RL33_VESOH</name>
<organism>
    <name type="scientific">Vesicomyosocius okutanii subsp. Calyptogena okutanii (strain HA)</name>
    <dbReference type="NCBI Taxonomy" id="412965"/>
    <lineage>
        <taxon>Bacteria</taxon>
        <taxon>Pseudomonadati</taxon>
        <taxon>Pseudomonadota</taxon>
        <taxon>Gammaproteobacteria</taxon>
        <taxon>Candidatus Pseudothioglobaceae</taxon>
        <taxon>Candidatus Vesicomyosocius</taxon>
    </lineage>
</organism>
<protein>
    <recommendedName>
        <fullName evidence="1">Large ribosomal subunit protein bL33</fullName>
    </recommendedName>
    <alternativeName>
        <fullName evidence="2">50S ribosomal protein L33</fullName>
    </alternativeName>
</protein>
<feature type="chain" id="PRO_0000356774" description="Large ribosomal subunit protein bL33">
    <location>
        <begin position="1"/>
        <end position="51"/>
    </location>
</feature>
<gene>
    <name evidence="1" type="primary">rpmG</name>
    <name type="ordered locus">COSY_0888</name>
</gene>
<comment type="similarity">
    <text evidence="1">Belongs to the bacterial ribosomal protein bL33 family.</text>
</comment>
<sequence>MRETIKLVSSAKTGHFYTATKNKRLHPEKVEVKKFDPVVRKHVMYKEVKIK</sequence>
<accession>A5CVN3</accession>